<proteinExistence type="inferred from homology"/>
<name>Y539_JANSC</name>
<feature type="chain" id="PRO_0000383253" description="Nucleotide-binding protein Jann_0539">
    <location>
        <begin position="1"/>
        <end position="318"/>
    </location>
</feature>
<feature type="region of interest" description="Disordered" evidence="2">
    <location>
        <begin position="278"/>
        <end position="318"/>
    </location>
</feature>
<feature type="compositionally biased region" description="Basic and acidic residues" evidence="2">
    <location>
        <begin position="286"/>
        <end position="302"/>
    </location>
</feature>
<feature type="binding site" evidence="1">
    <location>
        <begin position="17"/>
        <end position="24"/>
    </location>
    <ligand>
        <name>ATP</name>
        <dbReference type="ChEBI" id="CHEBI:30616"/>
    </ligand>
</feature>
<feature type="binding site" evidence="1">
    <location>
        <begin position="64"/>
        <end position="67"/>
    </location>
    <ligand>
        <name>GTP</name>
        <dbReference type="ChEBI" id="CHEBI:37565"/>
    </ligand>
</feature>
<dbReference type="EMBL" id="CP000264">
    <property type="protein sequence ID" value="ABD53456.1"/>
    <property type="molecule type" value="Genomic_DNA"/>
</dbReference>
<dbReference type="RefSeq" id="WP_011453665.1">
    <property type="nucleotide sequence ID" value="NC_007802.1"/>
</dbReference>
<dbReference type="SMR" id="Q28V06"/>
<dbReference type="STRING" id="290400.Jann_0539"/>
<dbReference type="KEGG" id="jan:Jann_0539"/>
<dbReference type="eggNOG" id="COG1660">
    <property type="taxonomic scope" value="Bacteria"/>
</dbReference>
<dbReference type="HOGENOM" id="CLU_059558_0_0_5"/>
<dbReference type="OrthoDB" id="9784461at2"/>
<dbReference type="Proteomes" id="UP000008326">
    <property type="component" value="Chromosome"/>
</dbReference>
<dbReference type="GO" id="GO:0005524">
    <property type="term" value="F:ATP binding"/>
    <property type="evidence" value="ECO:0007669"/>
    <property type="project" value="UniProtKB-UniRule"/>
</dbReference>
<dbReference type="GO" id="GO:0005525">
    <property type="term" value="F:GTP binding"/>
    <property type="evidence" value="ECO:0007669"/>
    <property type="project" value="UniProtKB-UniRule"/>
</dbReference>
<dbReference type="Gene3D" id="3.40.50.300">
    <property type="entry name" value="P-loop containing nucleotide triphosphate hydrolases"/>
    <property type="match status" value="1"/>
</dbReference>
<dbReference type="HAMAP" id="MF_00636">
    <property type="entry name" value="RapZ_like"/>
    <property type="match status" value="1"/>
</dbReference>
<dbReference type="InterPro" id="IPR027417">
    <property type="entry name" value="P-loop_NTPase"/>
</dbReference>
<dbReference type="InterPro" id="IPR005337">
    <property type="entry name" value="RapZ-like"/>
</dbReference>
<dbReference type="InterPro" id="IPR053930">
    <property type="entry name" value="RapZ-like_N"/>
</dbReference>
<dbReference type="InterPro" id="IPR053931">
    <property type="entry name" value="RapZ_C"/>
</dbReference>
<dbReference type="NCBIfam" id="NF003828">
    <property type="entry name" value="PRK05416.1"/>
    <property type="match status" value="1"/>
</dbReference>
<dbReference type="PANTHER" id="PTHR30448">
    <property type="entry name" value="RNASE ADAPTER PROTEIN RAPZ"/>
    <property type="match status" value="1"/>
</dbReference>
<dbReference type="PANTHER" id="PTHR30448:SF0">
    <property type="entry name" value="RNASE ADAPTER PROTEIN RAPZ"/>
    <property type="match status" value="1"/>
</dbReference>
<dbReference type="Pfam" id="PF22740">
    <property type="entry name" value="PapZ_C"/>
    <property type="match status" value="1"/>
</dbReference>
<dbReference type="Pfam" id="PF03668">
    <property type="entry name" value="RapZ-like_N"/>
    <property type="match status" value="1"/>
</dbReference>
<dbReference type="PIRSF" id="PIRSF005052">
    <property type="entry name" value="P-loopkin"/>
    <property type="match status" value="1"/>
</dbReference>
<dbReference type="SUPFAM" id="SSF52540">
    <property type="entry name" value="P-loop containing nucleoside triphosphate hydrolases"/>
    <property type="match status" value="1"/>
</dbReference>
<keyword id="KW-0067">ATP-binding</keyword>
<keyword id="KW-0342">GTP-binding</keyword>
<keyword id="KW-0547">Nucleotide-binding</keyword>
<keyword id="KW-1185">Reference proteome</keyword>
<comment type="function">
    <text evidence="1">Displays ATPase and GTPase activities.</text>
</comment>
<comment type="similarity">
    <text evidence="1">Belongs to the RapZ-like family.</text>
</comment>
<evidence type="ECO:0000255" key="1">
    <source>
        <dbReference type="HAMAP-Rule" id="MF_00636"/>
    </source>
</evidence>
<evidence type="ECO:0000256" key="2">
    <source>
        <dbReference type="SAM" id="MobiDB-lite"/>
    </source>
</evidence>
<sequence length="318" mass="35371">MPPPNSAPPAQVVFVTGPSGAGRSTVINALEDLGFEAIDNLPLSLLPRLLEGAPPDRPLALCIDPRTRDFDARDLIHAYEKLEQDPAYTADLVFIDCEPATLQRRYSETRRRHPLAPDADPADGIAIEREMLAPLRTRADVLIDTTPLTVHRTRDEVIRLFALDRAPAMSIQIMSFSYRRALPISADLVFDCRFLRNPHWAPELRAKDGRQSDVQAYVAQDARFEAFRTQINAMLDLLLPAFKEEGKSHLTVAFGCTGGRHRSVTLAELTARRLAEEGWQVSKRHRDVDKDASENSDRDRGASARTAASTDDGEAEQP</sequence>
<organism>
    <name type="scientific">Jannaschia sp. (strain CCS1)</name>
    <dbReference type="NCBI Taxonomy" id="290400"/>
    <lineage>
        <taxon>Bacteria</taxon>
        <taxon>Pseudomonadati</taxon>
        <taxon>Pseudomonadota</taxon>
        <taxon>Alphaproteobacteria</taxon>
        <taxon>Rhodobacterales</taxon>
        <taxon>Roseobacteraceae</taxon>
        <taxon>Jannaschia</taxon>
    </lineage>
</organism>
<protein>
    <recommendedName>
        <fullName evidence="1">Nucleotide-binding protein Jann_0539</fullName>
    </recommendedName>
</protein>
<gene>
    <name type="ordered locus">Jann_0539</name>
</gene>
<reference key="1">
    <citation type="submission" date="2006-02" db="EMBL/GenBank/DDBJ databases">
        <title>Complete sequence of chromosome of Jannaschia sp. CCS1.</title>
        <authorList>
            <consortium name="US DOE Joint Genome Institute"/>
            <person name="Copeland A."/>
            <person name="Lucas S."/>
            <person name="Lapidus A."/>
            <person name="Barry K."/>
            <person name="Detter J.C."/>
            <person name="Glavina del Rio T."/>
            <person name="Hammon N."/>
            <person name="Israni S."/>
            <person name="Pitluck S."/>
            <person name="Brettin T."/>
            <person name="Bruce D."/>
            <person name="Han C."/>
            <person name="Tapia R."/>
            <person name="Gilna P."/>
            <person name="Chertkov O."/>
            <person name="Saunders E."/>
            <person name="Schmutz J."/>
            <person name="Larimer F."/>
            <person name="Land M."/>
            <person name="Kyrpides N."/>
            <person name="Lykidis A."/>
            <person name="Moran M.A."/>
            <person name="Belas R."/>
            <person name="Ye W."/>
            <person name="Buchan A."/>
            <person name="Gonzalez J.M."/>
            <person name="Schell M.A."/>
            <person name="Richardson P."/>
        </authorList>
    </citation>
    <scope>NUCLEOTIDE SEQUENCE [LARGE SCALE GENOMIC DNA]</scope>
    <source>
        <strain>CCS1</strain>
    </source>
</reference>
<accession>Q28V06</accession>